<feature type="chain" id="PRO_0000280818" description="Elongator complex protein 5">
    <location>
        <begin position="1"/>
        <end position="300"/>
    </location>
</feature>
<feature type="region of interest" description="Disordered" evidence="2">
    <location>
        <begin position="279"/>
        <end position="300"/>
    </location>
</feature>
<feature type="compositionally biased region" description="Acidic residues" evidence="2">
    <location>
        <begin position="284"/>
        <end position="300"/>
    </location>
</feature>
<feature type="modified residue" description="Phosphoserine" evidence="1">
    <location>
        <position position="252"/>
    </location>
</feature>
<feature type="sequence conflict" description="In Ref. 1; AAC16252." evidence="6" ref="1">
    <original>R</original>
    <variation>H</variation>
    <location>
        <position position="146"/>
    </location>
</feature>
<feature type="sequence conflict" description="In Ref. 1; AAC16252." evidence="6" ref="1">
    <original>H</original>
    <variation>R</variation>
    <location>
        <position position="278"/>
    </location>
</feature>
<feature type="sequence conflict" description="In Ref. 1; AAC16252." evidence="6" ref="1">
    <original>P</original>
    <variation>Q</variation>
    <location>
        <position position="291"/>
    </location>
</feature>
<name>ELP5_MOUSE</name>
<reference key="1">
    <citation type="journal article" date="1997" name="Cancer Res.">
        <title>Clone 10d/BM28 (CDCL1), an early S-phase protein, is an important growth regulator of melanoma.</title>
        <authorList>
            <person name="Spanjaard R.A."/>
            <person name="Lee P.J."/>
            <person name="Sarkar S."/>
            <person name="Goedegebuure P.S."/>
            <person name="Eberlein T.J."/>
        </authorList>
    </citation>
    <scope>NUCLEOTIDE SEQUENCE [MRNA]</scope>
    <scope>TISSUE SPECIFICITY</scope>
    <source>
        <tissue>Melanoma</tissue>
    </source>
</reference>
<reference key="2">
    <citation type="journal article" date="2005" name="Science">
        <title>The transcriptional landscape of the mammalian genome.</title>
        <authorList>
            <person name="Carninci P."/>
            <person name="Kasukawa T."/>
            <person name="Katayama S."/>
            <person name="Gough J."/>
            <person name="Frith M.C."/>
            <person name="Maeda N."/>
            <person name="Oyama R."/>
            <person name="Ravasi T."/>
            <person name="Lenhard B."/>
            <person name="Wells C."/>
            <person name="Kodzius R."/>
            <person name="Shimokawa K."/>
            <person name="Bajic V.B."/>
            <person name="Brenner S.E."/>
            <person name="Batalov S."/>
            <person name="Forrest A.R."/>
            <person name="Zavolan M."/>
            <person name="Davis M.J."/>
            <person name="Wilming L.G."/>
            <person name="Aidinis V."/>
            <person name="Allen J.E."/>
            <person name="Ambesi-Impiombato A."/>
            <person name="Apweiler R."/>
            <person name="Aturaliya R.N."/>
            <person name="Bailey T.L."/>
            <person name="Bansal M."/>
            <person name="Baxter L."/>
            <person name="Beisel K.W."/>
            <person name="Bersano T."/>
            <person name="Bono H."/>
            <person name="Chalk A.M."/>
            <person name="Chiu K.P."/>
            <person name="Choudhary V."/>
            <person name="Christoffels A."/>
            <person name="Clutterbuck D.R."/>
            <person name="Crowe M.L."/>
            <person name="Dalla E."/>
            <person name="Dalrymple B.P."/>
            <person name="de Bono B."/>
            <person name="Della Gatta G."/>
            <person name="di Bernardo D."/>
            <person name="Down T."/>
            <person name="Engstrom P."/>
            <person name="Fagiolini M."/>
            <person name="Faulkner G."/>
            <person name="Fletcher C.F."/>
            <person name="Fukushima T."/>
            <person name="Furuno M."/>
            <person name="Futaki S."/>
            <person name="Gariboldi M."/>
            <person name="Georgii-Hemming P."/>
            <person name="Gingeras T.R."/>
            <person name="Gojobori T."/>
            <person name="Green R.E."/>
            <person name="Gustincich S."/>
            <person name="Harbers M."/>
            <person name="Hayashi Y."/>
            <person name="Hensch T.K."/>
            <person name="Hirokawa N."/>
            <person name="Hill D."/>
            <person name="Huminiecki L."/>
            <person name="Iacono M."/>
            <person name="Ikeo K."/>
            <person name="Iwama A."/>
            <person name="Ishikawa T."/>
            <person name="Jakt M."/>
            <person name="Kanapin A."/>
            <person name="Katoh M."/>
            <person name="Kawasawa Y."/>
            <person name="Kelso J."/>
            <person name="Kitamura H."/>
            <person name="Kitano H."/>
            <person name="Kollias G."/>
            <person name="Krishnan S.P."/>
            <person name="Kruger A."/>
            <person name="Kummerfeld S.K."/>
            <person name="Kurochkin I.V."/>
            <person name="Lareau L.F."/>
            <person name="Lazarevic D."/>
            <person name="Lipovich L."/>
            <person name="Liu J."/>
            <person name="Liuni S."/>
            <person name="McWilliam S."/>
            <person name="Madan Babu M."/>
            <person name="Madera M."/>
            <person name="Marchionni L."/>
            <person name="Matsuda H."/>
            <person name="Matsuzawa S."/>
            <person name="Miki H."/>
            <person name="Mignone F."/>
            <person name="Miyake S."/>
            <person name="Morris K."/>
            <person name="Mottagui-Tabar S."/>
            <person name="Mulder N."/>
            <person name="Nakano N."/>
            <person name="Nakauchi H."/>
            <person name="Ng P."/>
            <person name="Nilsson R."/>
            <person name="Nishiguchi S."/>
            <person name="Nishikawa S."/>
            <person name="Nori F."/>
            <person name="Ohara O."/>
            <person name="Okazaki Y."/>
            <person name="Orlando V."/>
            <person name="Pang K.C."/>
            <person name="Pavan W.J."/>
            <person name="Pavesi G."/>
            <person name="Pesole G."/>
            <person name="Petrovsky N."/>
            <person name="Piazza S."/>
            <person name="Reed J."/>
            <person name="Reid J.F."/>
            <person name="Ring B.Z."/>
            <person name="Ringwald M."/>
            <person name="Rost B."/>
            <person name="Ruan Y."/>
            <person name="Salzberg S.L."/>
            <person name="Sandelin A."/>
            <person name="Schneider C."/>
            <person name="Schoenbach C."/>
            <person name="Sekiguchi K."/>
            <person name="Semple C.A."/>
            <person name="Seno S."/>
            <person name="Sessa L."/>
            <person name="Sheng Y."/>
            <person name="Shibata Y."/>
            <person name="Shimada H."/>
            <person name="Shimada K."/>
            <person name="Silva D."/>
            <person name="Sinclair B."/>
            <person name="Sperling S."/>
            <person name="Stupka E."/>
            <person name="Sugiura K."/>
            <person name="Sultana R."/>
            <person name="Takenaka Y."/>
            <person name="Taki K."/>
            <person name="Tammoja K."/>
            <person name="Tan S.L."/>
            <person name="Tang S."/>
            <person name="Taylor M.S."/>
            <person name="Tegner J."/>
            <person name="Teichmann S.A."/>
            <person name="Ueda H.R."/>
            <person name="van Nimwegen E."/>
            <person name="Verardo R."/>
            <person name="Wei C.L."/>
            <person name="Yagi K."/>
            <person name="Yamanishi H."/>
            <person name="Zabarovsky E."/>
            <person name="Zhu S."/>
            <person name="Zimmer A."/>
            <person name="Hide W."/>
            <person name="Bult C."/>
            <person name="Grimmond S.M."/>
            <person name="Teasdale R.D."/>
            <person name="Liu E.T."/>
            <person name="Brusic V."/>
            <person name="Quackenbush J."/>
            <person name="Wahlestedt C."/>
            <person name="Mattick J.S."/>
            <person name="Hume D.A."/>
            <person name="Kai C."/>
            <person name="Sasaki D."/>
            <person name="Tomaru Y."/>
            <person name="Fukuda S."/>
            <person name="Kanamori-Katayama M."/>
            <person name="Suzuki M."/>
            <person name="Aoki J."/>
            <person name="Arakawa T."/>
            <person name="Iida J."/>
            <person name="Imamura K."/>
            <person name="Itoh M."/>
            <person name="Kato T."/>
            <person name="Kawaji H."/>
            <person name="Kawagashira N."/>
            <person name="Kawashima T."/>
            <person name="Kojima M."/>
            <person name="Kondo S."/>
            <person name="Konno H."/>
            <person name="Nakano K."/>
            <person name="Ninomiya N."/>
            <person name="Nishio T."/>
            <person name="Okada M."/>
            <person name="Plessy C."/>
            <person name="Shibata K."/>
            <person name="Shiraki T."/>
            <person name="Suzuki S."/>
            <person name="Tagami M."/>
            <person name="Waki K."/>
            <person name="Watahiki A."/>
            <person name="Okamura-Oho Y."/>
            <person name="Suzuki H."/>
            <person name="Kawai J."/>
            <person name="Hayashizaki Y."/>
        </authorList>
    </citation>
    <scope>NUCLEOTIDE SEQUENCE [LARGE SCALE MRNA]</scope>
    <source>
        <strain>C57BL/6J</strain>
        <tissue>Bone marrow</tissue>
        <tissue>Hippocampus</tissue>
    </source>
</reference>
<reference key="3">
    <citation type="journal article" date="2009" name="PLoS Biol.">
        <title>Lineage-specific biology revealed by a finished genome assembly of the mouse.</title>
        <authorList>
            <person name="Church D.M."/>
            <person name="Goodstadt L."/>
            <person name="Hillier L.W."/>
            <person name="Zody M.C."/>
            <person name="Goldstein S."/>
            <person name="She X."/>
            <person name="Bult C.J."/>
            <person name="Agarwala R."/>
            <person name="Cherry J.L."/>
            <person name="DiCuccio M."/>
            <person name="Hlavina W."/>
            <person name="Kapustin Y."/>
            <person name="Meric P."/>
            <person name="Maglott D."/>
            <person name="Birtle Z."/>
            <person name="Marques A.C."/>
            <person name="Graves T."/>
            <person name="Zhou S."/>
            <person name="Teague B."/>
            <person name="Potamousis K."/>
            <person name="Churas C."/>
            <person name="Place M."/>
            <person name="Herschleb J."/>
            <person name="Runnheim R."/>
            <person name="Forrest D."/>
            <person name="Amos-Landgraf J."/>
            <person name="Schwartz D.C."/>
            <person name="Cheng Z."/>
            <person name="Lindblad-Toh K."/>
            <person name="Eichler E.E."/>
            <person name="Ponting C.P."/>
        </authorList>
    </citation>
    <scope>NUCLEOTIDE SEQUENCE [LARGE SCALE GENOMIC DNA]</scope>
    <source>
        <strain>C57BL/6J</strain>
    </source>
</reference>
<reference key="4">
    <citation type="journal article" date="2004" name="Genome Res.">
        <title>The status, quality, and expansion of the NIH full-length cDNA project: the Mammalian Gene Collection (MGC).</title>
        <authorList>
            <consortium name="The MGC Project Team"/>
        </authorList>
    </citation>
    <scope>NUCLEOTIDE SEQUENCE [LARGE SCALE MRNA]</scope>
    <source>
        <strain>FVB/N</strain>
        <tissue>Mammary tumor</tissue>
    </source>
</reference>
<reference key="5">
    <citation type="journal article" date="2012" name="J. Biol. Chem.">
        <title>DERP6 (ELP5) and C3ORF75 (ELP6) regulate tumorigenicity and migration of melanoma cells as subunits of Elongator.</title>
        <authorList>
            <person name="Close P."/>
            <person name="Gillard M."/>
            <person name="Ladang A."/>
            <person name="Jiang Z."/>
            <person name="Papuga J."/>
            <person name="Hawkes N."/>
            <person name="Nguyen L."/>
            <person name="Chapelle J.P."/>
            <person name="Bouillenne F."/>
            <person name="Svejstrup J."/>
            <person name="Fillet M."/>
            <person name="Chariot A."/>
        </authorList>
    </citation>
    <scope>FUNCTION</scope>
</reference>
<reference key="6">
    <citation type="journal article" date="2018" name="Nat. Commun.">
        <title>Elongator mutation in mice induces neurodegeneration and ataxia-like behavior.</title>
        <authorList>
            <person name="Kojic M."/>
            <person name="Gaik M."/>
            <person name="Kiska B."/>
            <person name="Salerno-Kochan A."/>
            <person name="Hunt S."/>
            <person name="Tedoldi A."/>
            <person name="Mureev S."/>
            <person name="Jones A."/>
            <person name="Whittle B."/>
            <person name="Genovesi L.A."/>
            <person name="Adolphe C."/>
            <person name="Brown D.L."/>
            <person name="Stow J.L."/>
            <person name="Alexandrov K."/>
            <person name="Sah P."/>
            <person name="Glatt S."/>
            <person name="Wainwright B.J."/>
        </authorList>
    </citation>
    <scope>TISSUE SPECIFICITY</scope>
</reference>
<dbReference type="EMBL" id="AF004107">
    <property type="protein sequence ID" value="AAC16252.1"/>
    <property type="molecule type" value="mRNA"/>
</dbReference>
<dbReference type="EMBL" id="AK152582">
    <property type="protein sequence ID" value="BAE31332.1"/>
    <property type="molecule type" value="mRNA"/>
</dbReference>
<dbReference type="EMBL" id="AK013662">
    <property type="protein sequence ID" value="BAB28944.1"/>
    <property type="molecule type" value="mRNA"/>
</dbReference>
<dbReference type="EMBL" id="AL596185">
    <property type="status" value="NOT_ANNOTATED_CDS"/>
    <property type="molecule type" value="Genomic_DNA"/>
</dbReference>
<dbReference type="EMBL" id="BC003752">
    <property type="protein sequence ID" value="AAH03752.1"/>
    <property type="molecule type" value="mRNA"/>
</dbReference>
<dbReference type="CCDS" id="CCDS24926.1"/>
<dbReference type="RefSeq" id="NP_061210.2">
    <property type="nucleotide sequence ID" value="NM_018740.2"/>
</dbReference>
<dbReference type="RefSeq" id="XP_006533815.1">
    <property type="nucleotide sequence ID" value="XM_006533752.5"/>
</dbReference>
<dbReference type="EMDB" id="EMD-15626"/>
<dbReference type="BioGRID" id="207617">
    <property type="interactions" value="4"/>
</dbReference>
<dbReference type="FunCoup" id="Q99L85">
    <property type="interactions" value="2758"/>
</dbReference>
<dbReference type="STRING" id="10090.ENSMUSP00000104235"/>
<dbReference type="iPTMnet" id="Q99L85"/>
<dbReference type="PhosphoSitePlus" id="Q99L85"/>
<dbReference type="jPOST" id="Q99L85"/>
<dbReference type="PaxDb" id="10090-ENSMUSP00000104235"/>
<dbReference type="PeptideAtlas" id="Q99L85"/>
<dbReference type="ProteomicsDB" id="275748"/>
<dbReference type="Pumba" id="Q99L85"/>
<dbReference type="Antibodypedia" id="11862">
    <property type="antibodies" value="79 antibodies from 20 providers"/>
</dbReference>
<dbReference type="DNASU" id="54351"/>
<dbReference type="Ensembl" id="ENSMUST00000108594.8">
    <property type="protein sequence ID" value="ENSMUSP00000104235.2"/>
    <property type="gene ID" value="ENSMUSG00000018565.18"/>
</dbReference>
<dbReference type="GeneID" id="54351"/>
<dbReference type="KEGG" id="mmu:54351"/>
<dbReference type="UCSC" id="uc007jtc.3">
    <property type="organism name" value="mouse"/>
</dbReference>
<dbReference type="AGR" id="MGI:1859017"/>
<dbReference type="CTD" id="23587"/>
<dbReference type="MGI" id="MGI:1859017">
    <property type="gene designation" value="Elp5"/>
</dbReference>
<dbReference type="VEuPathDB" id="HostDB:ENSMUSG00000018565"/>
<dbReference type="eggNOG" id="ENOG502QQ2R">
    <property type="taxonomic scope" value="Eukaryota"/>
</dbReference>
<dbReference type="GeneTree" id="ENSGT00390000009210"/>
<dbReference type="HOGENOM" id="CLU_076374_0_0_1"/>
<dbReference type="InParanoid" id="Q99L85"/>
<dbReference type="OMA" id="DEEIFCI"/>
<dbReference type="OrthoDB" id="166907at2759"/>
<dbReference type="PhylomeDB" id="Q99L85"/>
<dbReference type="TreeFam" id="TF314636"/>
<dbReference type="UniPathway" id="UPA00988"/>
<dbReference type="BioGRID-ORCS" id="54351">
    <property type="hits" value="24 hits in 75 CRISPR screens"/>
</dbReference>
<dbReference type="ChiTaRS" id="Elp5">
    <property type="organism name" value="mouse"/>
</dbReference>
<dbReference type="PRO" id="PR:Q99L85"/>
<dbReference type="Proteomes" id="UP000000589">
    <property type="component" value="Chromosome 11"/>
</dbReference>
<dbReference type="RNAct" id="Q99L85">
    <property type="molecule type" value="protein"/>
</dbReference>
<dbReference type="Bgee" id="ENSMUSG00000018565">
    <property type="expression patterns" value="Expressed in spermatocyte and 256 other cell types or tissues"/>
</dbReference>
<dbReference type="ExpressionAtlas" id="Q99L85">
    <property type="expression patterns" value="baseline and differential"/>
</dbReference>
<dbReference type="GO" id="GO:0005737">
    <property type="term" value="C:cytoplasm"/>
    <property type="evidence" value="ECO:0000250"/>
    <property type="project" value="UniProtKB"/>
</dbReference>
<dbReference type="GO" id="GO:0005829">
    <property type="term" value="C:cytosol"/>
    <property type="evidence" value="ECO:0007669"/>
    <property type="project" value="Ensembl"/>
</dbReference>
<dbReference type="GO" id="GO:0033588">
    <property type="term" value="C:elongator holoenzyme complex"/>
    <property type="evidence" value="ECO:0000250"/>
    <property type="project" value="UniProtKB"/>
</dbReference>
<dbReference type="GO" id="GO:0005654">
    <property type="term" value="C:nucleoplasm"/>
    <property type="evidence" value="ECO:0007669"/>
    <property type="project" value="Ensembl"/>
</dbReference>
<dbReference type="GO" id="GO:0005634">
    <property type="term" value="C:nucleus"/>
    <property type="evidence" value="ECO:0000250"/>
    <property type="project" value="UniProtKB"/>
</dbReference>
<dbReference type="GO" id="GO:0030335">
    <property type="term" value="P:positive regulation of cell migration"/>
    <property type="evidence" value="ECO:0000315"/>
    <property type="project" value="UniProtKB"/>
</dbReference>
<dbReference type="GO" id="GO:0002098">
    <property type="term" value="P:tRNA wobble uridine modification"/>
    <property type="evidence" value="ECO:0007669"/>
    <property type="project" value="InterPro"/>
</dbReference>
<dbReference type="CDD" id="cd19496">
    <property type="entry name" value="Elp5"/>
    <property type="match status" value="1"/>
</dbReference>
<dbReference type="Gene3D" id="3.40.50.300">
    <property type="entry name" value="P-loop containing nucleotide triphosphate hydrolases"/>
    <property type="match status" value="1"/>
</dbReference>
<dbReference type="InterPro" id="IPR019519">
    <property type="entry name" value="Elp5"/>
</dbReference>
<dbReference type="InterPro" id="IPR027417">
    <property type="entry name" value="P-loop_NTPase"/>
</dbReference>
<dbReference type="PANTHER" id="PTHR15641">
    <property type="entry name" value="ELONGATOR COMPLEX PROTEIN 5"/>
    <property type="match status" value="1"/>
</dbReference>
<dbReference type="PANTHER" id="PTHR15641:SF1">
    <property type="entry name" value="ELONGATOR COMPLEX PROTEIN 5"/>
    <property type="match status" value="1"/>
</dbReference>
<dbReference type="Pfam" id="PF10483">
    <property type="entry name" value="Elong_Iki1"/>
    <property type="match status" value="2"/>
</dbReference>
<comment type="function">
    <text evidence="1 3">Component of the elongator complex which is required for multiple tRNA modifications, including mcm5U (5-methoxycarbonylmethyl uridine), mcm5s2U (5-methoxycarbonylmethyl-2-thiouridine), and ncm5U (5-carbamoylmethyl uridine) (By similarity). The elongator complex catalyzes the formation of carboxymethyluridine in the wobble base at position 34 in tRNAs (By similarity). Involved in cell migration (PubMed:22854966).</text>
</comment>
<comment type="pathway">
    <text evidence="1">tRNA modification; 5-methoxycarbonylmethyl-2-thiouridine-tRNA biosynthesis.</text>
</comment>
<comment type="subunit">
    <text evidence="1">Component of the elongator complex which consists of ELP1, ELP2, ELP3, ELP4, ELP5 and ELP6; in the complex, is required for optimal binding of ELP3 to ELP4.</text>
</comment>
<comment type="subcellular location">
    <subcellularLocation>
        <location evidence="1">Nucleus</location>
    </subcellularLocation>
    <subcellularLocation>
        <location evidence="1">Cytoplasm</location>
    </subcellularLocation>
</comment>
<comment type="tissue specificity">
    <text evidence="4 5">Widely expressed with highest levels in testis (PubMed:9371513). Expressed throughout the cerebellum (PubMed:30097576).</text>
</comment>
<comment type="PTM">
    <text evidence="1">Tyrosine-phosphorylated.</text>
</comment>
<comment type="similarity">
    <text evidence="6">Belongs to the ELP5 family.</text>
</comment>
<comment type="caution">
    <text evidence="1">The elongator complex was originally thought to play a role in transcription elongation. However, it is no longer thought to play a direct role in this process and its primary function is thought to be in tRNA modification.</text>
</comment>
<proteinExistence type="evidence at transcript level"/>
<keyword id="KW-0963">Cytoplasm</keyword>
<keyword id="KW-0539">Nucleus</keyword>
<keyword id="KW-0597">Phosphoprotein</keyword>
<keyword id="KW-1185">Reference proteome</keyword>
<keyword id="KW-0819">tRNA processing</keyword>
<organism>
    <name type="scientific">Mus musculus</name>
    <name type="common">Mouse</name>
    <dbReference type="NCBI Taxonomy" id="10090"/>
    <lineage>
        <taxon>Eukaryota</taxon>
        <taxon>Metazoa</taxon>
        <taxon>Chordata</taxon>
        <taxon>Craniata</taxon>
        <taxon>Vertebrata</taxon>
        <taxon>Euteleostomi</taxon>
        <taxon>Mammalia</taxon>
        <taxon>Eutheria</taxon>
        <taxon>Euarchontoglires</taxon>
        <taxon>Glires</taxon>
        <taxon>Rodentia</taxon>
        <taxon>Myomorpha</taxon>
        <taxon>Muroidea</taxon>
        <taxon>Muridae</taxon>
        <taxon>Murinae</taxon>
        <taxon>Mus</taxon>
        <taxon>Mus</taxon>
    </lineage>
</organism>
<accession>Q99L85</accession>
<accession>O08973</accession>
<accession>Q9CUX2</accession>
<evidence type="ECO:0000250" key="1">
    <source>
        <dbReference type="UniProtKB" id="Q8TE02"/>
    </source>
</evidence>
<evidence type="ECO:0000256" key="2">
    <source>
        <dbReference type="SAM" id="MobiDB-lite"/>
    </source>
</evidence>
<evidence type="ECO:0000269" key="3">
    <source>
    </source>
</evidence>
<evidence type="ECO:0000269" key="4">
    <source>
    </source>
</evidence>
<evidence type="ECO:0000269" key="5">
    <source>
    </source>
</evidence>
<evidence type="ECO:0000305" key="6"/>
<protein>
    <recommendedName>
        <fullName>Elongator complex protein 5</fullName>
    </recommendedName>
    <alternativeName>
        <fullName>Dermal papilla-derived protein 6 homolog</fullName>
    </alternativeName>
    <alternativeName>
        <fullName>Retinoic acid-induced protein 12</fullName>
    </alternativeName>
</protein>
<sequence length="300" mass="33498">MLDSLLAIGGLVLLRDSVEWEGRSLLKALIKKSALRGEQVHVLGCEVSEEEFREGFDSDVNSRLVYHDLFRDPLNWSKPGEAVPEGPLKALRSMCKRTDHGSVTIALDSLSWLLCHIPCVTLCQALHALSQQNGDPGDNSLVEQVRVLGLLHEELHGPGSMGALNTLAHTEVTLSGKVDQTSASILCRRPQQRATYQTWWFSVLPDFSLTLHEGLPLRSELHPDHHTTQVDPTAHLTFNLHLSKKEREARDSLTLPFQFSSEKQKALLHPVPSRTTGHIFYEPDAFDDVDPEDPDDDLDI</sequence>
<gene>
    <name type="primary">Elp5</name>
    <name type="synonym">Derp6</name>
    <name type="synonym">Rai12</name>
</gene>